<protein>
    <recommendedName>
        <fullName evidence="1">UDP-N-acetylglucosamine 1-carboxyvinyltransferase</fullName>
        <ecNumber evidence="1">2.5.1.7</ecNumber>
    </recommendedName>
    <alternativeName>
        <fullName evidence="1">Enoylpyruvate transferase</fullName>
    </alternativeName>
    <alternativeName>
        <fullName evidence="1">UDP-N-acetylglucosamine enolpyruvyl transferase</fullName>
        <shortName evidence="1">EPT</shortName>
    </alternativeName>
</protein>
<proteinExistence type="inferred from homology"/>
<dbReference type="EC" id="2.5.1.7" evidence="1"/>
<dbReference type="EMBL" id="CP000133">
    <property type="protein sequence ID" value="ABC89396.1"/>
    <property type="molecule type" value="Genomic_DNA"/>
</dbReference>
<dbReference type="RefSeq" id="WP_011423946.1">
    <property type="nucleotide sequence ID" value="NC_007761.1"/>
</dbReference>
<dbReference type="SMR" id="Q2KCP0"/>
<dbReference type="KEGG" id="ret:RHE_CH00579"/>
<dbReference type="eggNOG" id="COG0766">
    <property type="taxonomic scope" value="Bacteria"/>
</dbReference>
<dbReference type="HOGENOM" id="CLU_027387_0_0_5"/>
<dbReference type="OrthoDB" id="9803760at2"/>
<dbReference type="UniPathway" id="UPA00219"/>
<dbReference type="Proteomes" id="UP000001936">
    <property type="component" value="Chromosome"/>
</dbReference>
<dbReference type="GO" id="GO:0005737">
    <property type="term" value="C:cytoplasm"/>
    <property type="evidence" value="ECO:0007669"/>
    <property type="project" value="UniProtKB-SubCell"/>
</dbReference>
<dbReference type="GO" id="GO:0008760">
    <property type="term" value="F:UDP-N-acetylglucosamine 1-carboxyvinyltransferase activity"/>
    <property type="evidence" value="ECO:0007669"/>
    <property type="project" value="UniProtKB-UniRule"/>
</dbReference>
<dbReference type="GO" id="GO:0051301">
    <property type="term" value="P:cell division"/>
    <property type="evidence" value="ECO:0007669"/>
    <property type="project" value="UniProtKB-KW"/>
</dbReference>
<dbReference type="GO" id="GO:0071555">
    <property type="term" value="P:cell wall organization"/>
    <property type="evidence" value="ECO:0007669"/>
    <property type="project" value="UniProtKB-KW"/>
</dbReference>
<dbReference type="GO" id="GO:0009252">
    <property type="term" value="P:peptidoglycan biosynthetic process"/>
    <property type="evidence" value="ECO:0007669"/>
    <property type="project" value="UniProtKB-UniRule"/>
</dbReference>
<dbReference type="GO" id="GO:0008360">
    <property type="term" value="P:regulation of cell shape"/>
    <property type="evidence" value="ECO:0007669"/>
    <property type="project" value="UniProtKB-KW"/>
</dbReference>
<dbReference type="GO" id="GO:0019277">
    <property type="term" value="P:UDP-N-acetylgalactosamine biosynthetic process"/>
    <property type="evidence" value="ECO:0007669"/>
    <property type="project" value="InterPro"/>
</dbReference>
<dbReference type="CDD" id="cd01555">
    <property type="entry name" value="UdpNAET"/>
    <property type="match status" value="1"/>
</dbReference>
<dbReference type="FunFam" id="3.65.10.10:FF:000001">
    <property type="entry name" value="UDP-N-acetylglucosamine 1-carboxyvinyltransferase"/>
    <property type="match status" value="1"/>
</dbReference>
<dbReference type="Gene3D" id="3.65.10.10">
    <property type="entry name" value="Enolpyruvate transferase domain"/>
    <property type="match status" value="2"/>
</dbReference>
<dbReference type="HAMAP" id="MF_00111">
    <property type="entry name" value="MurA"/>
    <property type="match status" value="1"/>
</dbReference>
<dbReference type="InterPro" id="IPR001986">
    <property type="entry name" value="Enolpyruvate_Tfrase_dom"/>
</dbReference>
<dbReference type="InterPro" id="IPR036968">
    <property type="entry name" value="Enolpyruvate_Tfrase_sf"/>
</dbReference>
<dbReference type="InterPro" id="IPR050068">
    <property type="entry name" value="MurA_subfamily"/>
</dbReference>
<dbReference type="InterPro" id="IPR013792">
    <property type="entry name" value="RNA3'P_cycl/enolpyr_Trfase_a/b"/>
</dbReference>
<dbReference type="InterPro" id="IPR005750">
    <property type="entry name" value="UDP_GlcNAc_COvinyl_MurA"/>
</dbReference>
<dbReference type="NCBIfam" id="TIGR01072">
    <property type="entry name" value="murA"/>
    <property type="match status" value="1"/>
</dbReference>
<dbReference type="NCBIfam" id="NF006873">
    <property type="entry name" value="PRK09369.1"/>
    <property type="match status" value="1"/>
</dbReference>
<dbReference type="PANTHER" id="PTHR43783">
    <property type="entry name" value="UDP-N-ACETYLGLUCOSAMINE 1-CARBOXYVINYLTRANSFERASE"/>
    <property type="match status" value="1"/>
</dbReference>
<dbReference type="PANTHER" id="PTHR43783:SF1">
    <property type="entry name" value="UDP-N-ACETYLGLUCOSAMINE 1-CARBOXYVINYLTRANSFERASE"/>
    <property type="match status" value="1"/>
</dbReference>
<dbReference type="Pfam" id="PF00275">
    <property type="entry name" value="EPSP_synthase"/>
    <property type="match status" value="1"/>
</dbReference>
<dbReference type="SUPFAM" id="SSF55205">
    <property type="entry name" value="EPT/RTPC-like"/>
    <property type="match status" value="1"/>
</dbReference>
<feature type="chain" id="PRO_1000023081" description="UDP-N-acetylglucosamine 1-carboxyvinyltransferase">
    <location>
        <begin position="1"/>
        <end position="430"/>
    </location>
</feature>
<feature type="active site" description="Proton donor" evidence="1">
    <location>
        <position position="126"/>
    </location>
</feature>
<feature type="binding site" evidence="1">
    <location>
        <begin position="22"/>
        <end position="23"/>
    </location>
    <ligand>
        <name>phosphoenolpyruvate</name>
        <dbReference type="ChEBI" id="CHEBI:58702"/>
    </ligand>
</feature>
<feature type="binding site" evidence="1">
    <location>
        <position position="102"/>
    </location>
    <ligand>
        <name>UDP-N-acetyl-alpha-D-glucosamine</name>
        <dbReference type="ChEBI" id="CHEBI:57705"/>
    </ligand>
</feature>
<feature type="binding site" evidence="1">
    <location>
        <begin position="131"/>
        <end position="135"/>
    </location>
    <ligand>
        <name>UDP-N-acetyl-alpha-D-glucosamine</name>
        <dbReference type="ChEBI" id="CHEBI:57705"/>
    </ligand>
</feature>
<feature type="binding site" evidence="1">
    <location>
        <begin position="172"/>
        <end position="175"/>
    </location>
    <ligand>
        <name>UDP-N-acetyl-alpha-D-glucosamine</name>
        <dbReference type="ChEBI" id="CHEBI:57705"/>
    </ligand>
</feature>
<feature type="binding site" evidence="1">
    <location>
        <position position="317"/>
    </location>
    <ligand>
        <name>UDP-N-acetyl-alpha-D-glucosamine</name>
        <dbReference type="ChEBI" id="CHEBI:57705"/>
    </ligand>
</feature>
<feature type="binding site" evidence="1">
    <location>
        <position position="339"/>
    </location>
    <ligand>
        <name>UDP-N-acetyl-alpha-D-glucosamine</name>
        <dbReference type="ChEBI" id="CHEBI:57705"/>
    </ligand>
</feature>
<feature type="modified residue" description="2-(S-cysteinyl)pyruvic acid O-phosphothioketal" evidence="1">
    <location>
        <position position="126"/>
    </location>
</feature>
<organism>
    <name type="scientific">Rhizobium etli (strain ATCC 51251 / DSM 11541 / JCM 21823 / NBRC 15573 / CFN 42)</name>
    <dbReference type="NCBI Taxonomy" id="347834"/>
    <lineage>
        <taxon>Bacteria</taxon>
        <taxon>Pseudomonadati</taxon>
        <taxon>Pseudomonadota</taxon>
        <taxon>Alphaproteobacteria</taxon>
        <taxon>Hyphomicrobiales</taxon>
        <taxon>Rhizobiaceae</taxon>
        <taxon>Rhizobium/Agrobacterium group</taxon>
        <taxon>Rhizobium</taxon>
    </lineage>
</organism>
<sequence>MDRIRIVGGNELNGIIPISGAKNAALPLMIASLLTSDTLTLENVPHLADVELLMRILGNHGVDVAVNGRRERQEDSYARTIHFTCRTIVDTTASYELVSKMRASFWVIGPLLAREGHCRVSLPGGCAIGTRPVDLFIEGLTALGATMEIDAGYINAKAPDGGLIGARYTFPKVSVGATHVLMMAATLARGTTVIGNAAREPEVVDLANCLNAMGAKISGAGTSTITIEGVTSLSGARHRVLPDRIETGTYAMAVAMAGGDVVLENTDVALLDTALETLRRAGADISATNNGMRVRRNGAGIKPVDIVTDPFPGFPTDLQAQFMALMTRSSGISHVTETIFENRFMHVQELARLGARISLSGQTAKIEGVERLRGAPVMATDLRASVSLVIAGLAAEGETTVSRVYHLDRGFERLEAKLTRCGAVVERISE</sequence>
<gene>
    <name evidence="1" type="primary">murA</name>
    <name type="ordered locus">RHE_CH00579</name>
</gene>
<accession>Q2KCP0</accession>
<evidence type="ECO:0000255" key="1">
    <source>
        <dbReference type="HAMAP-Rule" id="MF_00111"/>
    </source>
</evidence>
<reference key="1">
    <citation type="journal article" date="2006" name="Proc. Natl. Acad. Sci. U.S.A.">
        <title>The partitioned Rhizobium etli genome: genetic and metabolic redundancy in seven interacting replicons.</title>
        <authorList>
            <person name="Gonzalez V."/>
            <person name="Santamaria R.I."/>
            <person name="Bustos P."/>
            <person name="Hernandez-Gonzalez I."/>
            <person name="Medrano-Soto A."/>
            <person name="Moreno-Hagelsieb G."/>
            <person name="Janga S.C."/>
            <person name="Ramirez M.A."/>
            <person name="Jimenez-Jacinto V."/>
            <person name="Collado-Vides J."/>
            <person name="Davila G."/>
        </authorList>
    </citation>
    <scope>NUCLEOTIDE SEQUENCE [LARGE SCALE GENOMIC DNA]</scope>
    <source>
        <strain>ATCC 51251 / DSM 11541 / JCM 21823 / NBRC 15573 / CFN 42</strain>
    </source>
</reference>
<comment type="function">
    <text evidence="1">Cell wall formation. Adds enolpyruvyl to UDP-N-acetylglucosamine.</text>
</comment>
<comment type="catalytic activity">
    <reaction evidence="1">
        <text>phosphoenolpyruvate + UDP-N-acetyl-alpha-D-glucosamine = UDP-N-acetyl-3-O-(1-carboxyvinyl)-alpha-D-glucosamine + phosphate</text>
        <dbReference type="Rhea" id="RHEA:18681"/>
        <dbReference type="ChEBI" id="CHEBI:43474"/>
        <dbReference type="ChEBI" id="CHEBI:57705"/>
        <dbReference type="ChEBI" id="CHEBI:58702"/>
        <dbReference type="ChEBI" id="CHEBI:68483"/>
        <dbReference type="EC" id="2.5.1.7"/>
    </reaction>
</comment>
<comment type="pathway">
    <text evidence="1">Cell wall biogenesis; peptidoglycan biosynthesis.</text>
</comment>
<comment type="subcellular location">
    <subcellularLocation>
        <location evidence="1">Cytoplasm</location>
    </subcellularLocation>
</comment>
<comment type="similarity">
    <text evidence="1">Belongs to the EPSP synthase family. MurA subfamily.</text>
</comment>
<name>MURA_RHIEC</name>
<keyword id="KW-0131">Cell cycle</keyword>
<keyword id="KW-0132">Cell division</keyword>
<keyword id="KW-0133">Cell shape</keyword>
<keyword id="KW-0961">Cell wall biogenesis/degradation</keyword>
<keyword id="KW-0963">Cytoplasm</keyword>
<keyword id="KW-0573">Peptidoglycan synthesis</keyword>
<keyword id="KW-0670">Pyruvate</keyword>
<keyword id="KW-1185">Reference proteome</keyword>
<keyword id="KW-0808">Transferase</keyword>